<reference key="1">
    <citation type="journal article" date="1999" name="Nature">
        <title>Sequence and analysis of chromosome 2 of the plant Arabidopsis thaliana.</title>
        <authorList>
            <person name="Lin X."/>
            <person name="Kaul S."/>
            <person name="Rounsley S.D."/>
            <person name="Shea T.P."/>
            <person name="Benito M.-I."/>
            <person name="Town C.D."/>
            <person name="Fujii C.Y."/>
            <person name="Mason T.M."/>
            <person name="Bowman C.L."/>
            <person name="Barnstead M.E."/>
            <person name="Feldblyum T.V."/>
            <person name="Buell C.R."/>
            <person name="Ketchum K.A."/>
            <person name="Lee J.J."/>
            <person name="Ronning C.M."/>
            <person name="Koo H.L."/>
            <person name="Moffat K.S."/>
            <person name="Cronin L.A."/>
            <person name="Shen M."/>
            <person name="Pai G."/>
            <person name="Van Aken S."/>
            <person name="Umayam L."/>
            <person name="Tallon L.J."/>
            <person name="Gill J.E."/>
            <person name="Adams M.D."/>
            <person name="Carrera A.J."/>
            <person name="Creasy T.H."/>
            <person name="Goodman H.M."/>
            <person name="Somerville C.R."/>
            <person name="Copenhaver G.P."/>
            <person name="Preuss D."/>
            <person name="Nierman W.C."/>
            <person name="White O."/>
            <person name="Eisen J.A."/>
            <person name="Salzberg S.L."/>
            <person name="Fraser C.M."/>
            <person name="Venter J.C."/>
        </authorList>
    </citation>
    <scope>NUCLEOTIDE SEQUENCE [LARGE SCALE GENOMIC DNA]</scope>
    <source>
        <strain>cv. Columbia</strain>
    </source>
</reference>
<reference key="2">
    <citation type="journal article" date="2017" name="Plant J.">
        <title>Araport11: a complete reannotation of the Arabidopsis thaliana reference genome.</title>
        <authorList>
            <person name="Cheng C.Y."/>
            <person name="Krishnakumar V."/>
            <person name="Chan A.P."/>
            <person name="Thibaud-Nissen F."/>
            <person name="Schobel S."/>
            <person name="Town C.D."/>
        </authorList>
    </citation>
    <scope>GENOME REANNOTATION</scope>
    <source>
        <strain>cv. Columbia</strain>
    </source>
</reference>
<reference key="3">
    <citation type="submission" date="2003-02" db="EMBL/GenBank/DDBJ databases">
        <title>Identification of Arabidopsis genes differentially expressed in response to virulent and avirulent strains of Pseudomonas syringae and salicylic acid.</title>
        <authorList>
            <person name="Gomez-Buitrago A.M."/>
            <person name="Lindsrtom L."/>
            <person name="Raina R."/>
        </authorList>
    </citation>
    <scope>NUCLEOTIDE SEQUENCE [MRNA] OF 136-283</scope>
</reference>
<reference key="4">
    <citation type="journal article" date="2005" name="J. Biol. Chem.">
        <title>Comprehensive analysis of cytosolic nudix hydrolases in Arabidopsis thaliana.</title>
        <authorList>
            <person name="Ogawa T."/>
            <person name="Ueda Y."/>
            <person name="Yoshimura K."/>
            <person name="Shigeoka S."/>
        </authorList>
    </citation>
    <scope>FUNCTION IN VITRO</scope>
    <scope>CATALYTIC ACTIVITY</scope>
    <scope>BIOPHYSICOCHEMICAL PROPERTIES</scope>
    <scope>TISSUE SPECIFICITY</scope>
</reference>
<proteinExistence type="evidence at protein level"/>
<evidence type="ECO:0000250" key="1">
    <source>
        <dbReference type="UniProtKB" id="P32664"/>
    </source>
</evidence>
<evidence type="ECO:0000255" key="2">
    <source>
        <dbReference type="PROSITE-ProRule" id="PRU00794"/>
    </source>
</evidence>
<evidence type="ECO:0000269" key="3">
    <source>
    </source>
</evidence>
<evidence type="ECO:0000303" key="4">
    <source>
    </source>
</evidence>
<evidence type="ECO:0000305" key="5"/>
<evidence type="ECO:0000305" key="6">
    <source>
    </source>
</evidence>
<evidence type="ECO:0000312" key="7">
    <source>
        <dbReference type="Araport" id="AT2G04450"/>
    </source>
</evidence>
<evidence type="ECO:0000312" key="8">
    <source>
        <dbReference type="EMBL" id="AAD25833.1"/>
    </source>
</evidence>
<protein>
    <recommendedName>
        <fullName evidence="4">Nudix hydrolase 6</fullName>
        <shortName evidence="4">AtNUDT6</shortName>
        <ecNumber evidence="3">3.6.1.-</ecNumber>
    </recommendedName>
    <alternativeName>
        <fullName evidence="5">ADP-ribose pyrophosphatase</fullName>
        <ecNumber evidence="3">3.6.1.13</ecNumber>
    </alternativeName>
    <alternativeName>
        <fullName evidence="5">NADH pyrophosphatase</fullName>
        <ecNumber evidence="3">3.6.1.22</ecNumber>
    </alternativeName>
</protein>
<accession>Q9SJC4</accession>
<comment type="function">
    <text evidence="3">Probably mediates the hydrolysis of some nucleoside diphosphate derivatives. In vitro, it can use both NADH and ADP-ribose as substrates; however the relevance of such substrates in vivo is unclear.</text>
</comment>
<comment type="catalytic activity">
    <reaction evidence="6">
        <text>ADP-D-ribose + H2O = D-ribose 5-phosphate + AMP + 2 H(+)</text>
        <dbReference type="Rhea" id="RHEA:10412"/>
        <dbReference type="ChEBI" id="CHEBI:15377"/>
        <dbReference type="ChEBI" id="CHEBI:15378"/>
        <dbReference type="ChEBI" id="CHEBI:57967"/>
        <dbReference type="ChEBI" id="CHEBI:78346"/>
        <dbReference type="ChEBI" id="CHEBI:456215"/>
        <dbReference type="EC" id="3.6.1.13"/>
    </reaction>
</comment>
<comment type="catalytic activity">
    <reaction evidence="6">
        <text>NAD(+) + H2O = beta-nicotinamide D-ribonucleotide + AMP + 2 H(+)</text>
        <dbReference type="Rhea" id="RHEA:11800"/>
        <dbReference type="ChEBI" id="CHEBI:14649"/>
        <dbReference type="ChEBI" id="CHEBI:15377"/>
        <dbReference type="ChEBI" id="CHEBI:15378"/>
        <dbReference type="ChEBI" id="CHEBI:57540"/>
        <dbReference type="ChEBI" id="CHEBI:456215"/>
        <dbReference type="EC" id="3.6.1.22"/>
    </reaction>
</comment>
<comment type="catalytic activity">
    <reaction evidence="6">
        <text>NADH + H2O = reduced beta-nicotinamide D-ribonucleotide + AMP + 2 H(+)</text>
        <dbReference type="Rhea" id="RHEA:48868"/>
        <dbReference type="ChEBI" id="CHEBI:15377"/>
        <dbReference type="ChEBI" id="CHEBI:15378"/>
        <dbReference type="ChEBI" id="CHEBI:57945"/>
        <dbReference type="ChEBI" id="CHEBI:90832"/>
        <dbReference type="ChEBI" id="CHEBI:456215"/>
        <dbReference type="EC" id="3.6.1.22"/>
    </reaction>
</comment>
<comment type="cofactor">
    <cofactor evidence="1">
        <name>Mg(2+)</name>
        <dbReference type="ChEBI" id="CHEBI:18420"/>
    </cofactor>
    <cofactor evidence="1">
        <name>Mn(2+)</name>
        <dbReference type="ChEBI" id="CHEBI:29035"/>
    </cofactor>
    <text evidence="1">Divalent metal cations. Mg(2+) or Mn(2+).</text>
</comment>
<comment type="biophysicochemical properties">
    <kinetics>
        <KM evidence="3">23 uM for ADP-ribose</KM>
        <KM evidence="3">13.7 uM for NADH</KM>
        <Vmax evidence="3">0.18 umol/min/mg enzyme with ADP-ribose as substrate</Vmax>
        <Vmax evidence="3">0.32 umol/min/mg enzyme with NADPH as substrate</Vmax>
    </kinetics>
</comment>
<comment type="tissue specificity">
    <text evidence="3">Expressed in stems and leaves. Weakly or not expressed in roots.</text>
</comment>
<comment type="similarity">
    <text evidence="5">Belongs to the Nudix hydrolase family.</text>
</comment>
<gene>
    <name evidence="4" type="primary">NUDT6</name>
    <name evidence="5" type="synonym">NUDX6</name>
    <name evidence="7" type="ordered locus">At2g04450</name>
    <name evidence="8" type="ORF">T1O3.14</name>
</gene>
<name>NUDT6_ARATH</name>
<sequence>MDNEDQESLLLQGVPDNYGGVKVNLTEPMTIEDFVPKLRASLVYWSNQGTKGIWLKLADGLDNLIAPAKAEGFVCHHAEREYTMLTSWIADVPSTLPANASHRIGVGAFVLNKKTKEVLVVQEIDGHFKGTGVWKLPTGVVKEGENIWEGALREVEEETGIKTKFVEVLAFRESHQAFLEIKTDIFFLCELEPTTFEIKKQDSEILAAKWMPIEEYVNQPWNQKKELFRFMANICLKRLQEMEYMGFSKVLTTTSSGKESYLYCNTDHANLLNATRGLASTSG</sequence>
<organism>
    <name type="scientific">Arabidopsis thaliana</name>
    <name type="common">Mouse-ear cress</name>
    <dbReference type="NCBI Taxonomy" id="3702"/>
    <lineage>
        <taxon>Eukaryota</taxon>
        <taxon>Viridiplantae</taxon>
        <taxon>Streptophyta</taxon>
        <taxon>Embryophyta</taxon>
        <taxon>Tracheophyta</taxon>
        <taxon>Spermatophyta</taxon>
        <taxon>Magnoliopsida</taxon>
        <taxon>eudicotyledons</taxon>
        <taxon>Gunneridae</taxon>
        <taxon>Pentapetalae</taxon>
        <taxon>rosids</taxon>
        <taxon>malvids</taxon>
        <taxon>Brassicales</taxon>
        <taxon>Brassicaceae</taxon>
        <taxon>Camelineae</taxon>
        <taxon>Arabidopsis</taxon>
    </lineage>
</organism>
<dbReference type="EC" id="3.6.1.-" evidence="3"/>
<dbReference type="EC" id="3.6.1.13" evidence="3"/>
<dbReference type="EC" id="3.6.1.22" evidence="3"/>
<dbReference type="EMBL" id="AC006951">
    <property type="protein sequence ID" value="AAD25833.1"/>
    <property type="molecule type" value="Genomic_DNA"/>
</dbReference>
<dbReference type="EMBL" id="CP002685">
    <property type="protein sequence ID" value="AEC05837.1"/>
    <property type="molecule type" value="Genomic_DNA"/>
</dbReference>
<dbReference type="EMBL" id="CB185816">
    <property type="status" value="NOT_ANNOTATED_CDS"/>
    <property type="molecule type" value="mRNA"/>
</dbReference>
<dbReference type="PIR" id="G84457">
    <property type="entry name" value="G84457"/>
</dbReference>
<dbReference type="RefSeq" id="NP_178526.1">
    <property type="nucleotide sequence ID" value="NM_126478.4"/>
</dbReference>
<dbReference type="SMR" id="Q9SJC4"/>
<dbReference type="BioGRID" id="386">
    <property type="interactions" value="1"/>
</dbReference>
<dbReference type="FunCoup" id="Q9SJC4">
    <property type="interactions" value="163"/>
</dbReference>
<dbReference type="STRING" id="3702.Q9SJC4"/>
<dbReference type="PaxDb" id="3702-AT2G04450.1"/>
<dbReference type="ProteomicsDB" id="248624"/>
<dbReference type="DNASU" id="814985"/>
<dbReference type="EnsemblPlants" id="AT2G04450.1">
    <property type="protein sequence ID" value="AT2G04450.1"/>
    <property type="gene ID" value="AT2G04450"/>
</dbReference>
<dbReference type="GeneID" id="814985"/>
<dbReference type="Gramene" id="AT2G04450.1">
    <property type="protein sequence ID" value="AT2G04450.1"/>
    <property type="gene ID" value="AT2G04450"/>
</dbReference>
<dbReference type="KEGG" id="ath:AT2G04450"/>
<dbReference type="Araport" id="AT2G04450"/>
<dbReference type="TAIR" id="AT2G04450">
    <property type="gene designation" value="NUDT6"/>
</dbReference>
<dbReference type="eggNOG" id="KOG0648">
    <property type="taxonomic scope" value="Eukaryota"/>
</dbReference>
<dbReference type="HOGENOM" id="CLU_054299_1_0_1"/>
<dbReference type="InParanoid" id="Q9SJC4"/>
<dbReference type="OMA" id="FRFMANI"/>
<dbReference type="PhylomeDB" id="Q9SJC4"/>
<dbReference type="BioCyc" id="ARA:AT2G04450-MONOMER"/>
<dbReference type="BioCyc" id="MetaCyc:AT2G04450-MONOMER"/>
<dbReference type="SABIO-RK" id="Q9SJC4"/>
<dbReference type="PRO" id="PR:Q9SJC4"/>
<dbReference type="Proteomes" id="UP000006548">
    <property type="component" value="Chromosome 2"/>
</dbReference>
<dbReference type="ExpressionAtlas" id="Q9SJC4">
    <property type="expression patterns" value="baseline and differential"/>
</dbReference>
<dbReference type="GO" id="GO:0005829">
    <property type="term" value="C:cytosol"/>
    <property type="evidence" value="ECO:0000255"/>
    <property type="project" value="TAIR"/>
</dbReference>
<dbReference type="GO" id="GO:0047631">
    <property type="term" value="F:ADP-ribose diphosphatase activity"/>
    <property type="evidence" value="ECO:0000314"/>
    <property type="project" value="TAIR"/>
</dbReference>
<dbReference type="GO" id="GO:0046872">
    <property type="term" value="F:metal ion binding"/>
    <property type="evidence" value="ECO:0007669"/>
    <property type="project" value="UniProtKB-KW"/>
</dbReference>
<dbReference type="GO" id="GO:0051287">
    <property type="term" value="F:NAD binding"/>
    <property type="evidence" value="ECO:0000314"/>
    <property type="project" value="TAIR"/>
</dbReference>
<dbReference type="GO" id="GO:0000210">
    <property type="term" value="F:NAD+ diphosphatase activity"/>
    <property type="evidence" value="ECO:0007669"/>
    <property type="project" value="RHEA"/>
</dbReference>
<dbReference type="GO" id="GO:0035529">
    <property type="term" value="F:NADH pyrophosphatase activity"/>
    <property type="evidence" value="ECO:0000314"/>
    <property type="project" value="TAIR"/>
</dbReference>
<dbReference type="GO" id="GO:0080151">
    <property type="term" value="P:positive regulation of salicylic acid mediated signaling pathway"/>
    <property type="evidence" value="ECO:0000270"/>
    <property type="project" value="TAIR"/>
</dbReference>
<dbReference type="GO" id="GO:0051707">
    <property type="term" value="P:response to other organism"/>
    <property type="evidence" value="ECO:0000270"/>
    <property type="project" value="TAIR"/>
</dbReference>
<dbReference type="CDD" id="cd04670">
    <property type="entry name" value="NUDIX_ASFGF2_Nudt6"/>
    <property type="match status" value="1"/>
</dbReference>
<dbReference type="FunFam" id="3.40.630.30:FF:000016">
    <property type="entry name" value="nudix hydrolase 2"/>
    <property type="match status" value="1"/>
</dbReference>
<dbReference type="FunFam" id="3.90.79.10:FF:000015">
    <property type="entry name" value="Nudix hydrolase 8"/>
    <property type="match status" value="1"/>
</dbReference>
<dbReference type="Gene3D" id="3.40.630.30">
    <property type="match status" value="1"/>
</dbReference>
<dbReference type="Gene3D" id="3.90.79.10">
    <property type="entry name" value="Nucleoside Triphosphate Pyrophosphohydrolase"/>
    <property type="match status" value="1"/>
</dbReference>
<dbReference type="InterPro" id="IPR015797">
    <property type="entry name" value="NUDIX_hydrolase-like_dom_sf"/>
</dbReference>
<dbReference type="InterPro" id="IPR003293">
    <property type="entry name" value="Nudix_hydrolase6-like"/>
</dbReference>
<dbReference type="InterPro" id="IPR020084">
    <property type="entry name" value="NUDIX_hydrolase_CS"/>
</dbReference>
<dbReference type="InterPro" id="IPR000086">
    <property type="entry name" value="NUDIX_hydrolase_dom"/>
</dbReference>
<dbReference type="InterPro" id="IPR040618">
    <property type="entry name" value="Pre-Nudix"/>
</dbReference>
<dbReference type="PANTHER" id="PTHR13994:SF26">
    <property type="entry name" value="NUDIX HYDROLASE 5-RELATED"/>
    <property type="match status" value="1"/>
</dbReference>
<dbReference type="PANTHER" id="PTHR13994">
    <property type="entry name" value="NUDIX HYDROLASE RELATED"/>
    <property type="match status" value="1"/>
</dbReference>
<dbReference type="Pfam" id="PF00293">
    <property type="entry name" value="NUDIX"/>
    <property type="match status" value="1"/>
</dbReference>
<dbReference type="Pfam" id="PF18290">
    <property type="entry name" value="Nudix_hydro"/>
    <property type="match status" value="1"/>
</dbReference>
<dbReference type="PRINTS" id="PR01356">
    <property type="entry name" value="GFGPROTEIN"/>
</dbReference>
<dbReference type="SUPFAM" id="SSF55811">
    <property type="entry name" value="Nudix"/>
    <property type="match status" value="1"/>
</dbReference>
<dbReference type="PROSITE" id="PS51462">
    <property type="entry name" value="NUDIX"/>
    <property type="match status" value="1"/>
</dbReference>
<dbReference type="PROSITE" id="PS00893">
    <property type="entry name" value="NUDIX_BOX"/>
    <property type="match status" value="1"/>
</dbReference>
<keyword id="KW-0378">Hydrolase</keyword>
<keyword id="KW-0460">Magnesium</keyword>
<keyword id="KW-0464">Manganese</keyword>
<keyword id="KW-0479">Metal-binding</keyword>
<keyword id="KW-0520">NAD</keyword>
<keyword id="KW-1185">Reference proteome</keyword>
<feature type="chain" id="PRO_0000057126" description="Nudix hydrolase 6">
    <location>
        <begin position="1"/>
        <end position="283"/>
    </location>
</feature>
<feature type="domain" description="Nudix hydrolase" evidence="2">
    <location>
        <begin position="101"/>
        <end position="233"/>
    </location>
</feature>
<feature type="short sequence motif" description="Nudix box" evidence="2">
    <location>
        <begin position="139"/>
        <end position="160"/>
    </location>
</feature>
<feature type="binding site" evidence="1">
    <location>
        <position position="154"/>
    </location>
    <ligand>
        <name>a divalent metal cation</name>
        <dbReference type="ChEBI" id="CHEBI:60240"/>
    </ligand>
</feature>
<feature type="binding site" evidence="1">
    <location>
        <position position="158"/>
    </location>
    <ligand>
        <name>a divalent metal cation</name>
        <dbReference type="ChEBI" id="CHEBI:60240"/>
    </ligand>
</feature>
<feature type="binding site" evidence="1">
    <location>
        <position position="204"/>
    </location>
    <ligand>
        <name>a divalent metal cation</name>
        <dbReference type="ChEBI" id="CHEBI:60240"/>
    </ligand>
</feature>